<feature type="chain" id="PRO_0000111410" description="Small ribosomal subunit protein uS9">
    <location>
        <begin position="1"/>
        <end position="130"/>
    </location>
</feature>
<feature type="region of interest" description="Disordered" evidence="2">
    <location>
        <begin position="98"/>
        <end position="130"/>
    </location>
</feature>
<feature type="compositionally biased region" description="Basic residues" evidence="2">
    <location>
        <begin position="111"/>
        <end position="130"/>
    </location>
</feature>
<evidence type="ECO:0000255" key="1">
    <source>
        <dbReference type="HAMAP-Rule" id="MF_00532"/>
    </source>
</evidence>
<evidence type="ECO:0000256" key="2">
    <source>
        <dbReference type="SAM" id="MobiDB-lite"/>
    </source>
</evidence>
<evidence type="ECO:0000305" key="3"/>
<protein>
    <recommendedName>
        <fullName evidence="1">Small ribosomal subunit protein uS9</fullName>
    </recommendedName>
    <alternativeName>
        <fullName evidence="3">30S ribosomal protein S9</fullName>
    </alternativeName>
</protein>
<keyword id="KW-0687">Ribonucleoprotein</keyword>
<keyword id="KW-0689">Ribosomal protein</keyword>
<name>RS9_STAES</name>
<sequence length="130" mass="14646">MAQVEYKGTGRRKNSVARVRLVPGEGNITVNERDVRDYLPFESLILDLNQPFDVTETKGNYDVLVNVHGGGFTGQAQAIRHGIARALLEADPEYRGSLKRAGLLTRDPRMKERKKPGLKKARRSPQFSKR</sequence>
<proteinExistence type="inferred from homology"/>
<gene>
    <name evidence="1" type="primary">rpsI</name>
    <name type="ordered locus">SE_1790</name>
</gene>
<comment type="similarity">
    <text evidence="1">Belongs to the universal ribosomal protein uS9 family.</text>
</comment>
<accession>Q8CRJ0</accession>
<organism>
    <name type="scientific">Staphylococcus epidermidis (strain ATCC 12228 / FDA PCI 1200)</name>
    <dbReference type="NCBI Taxonomy" id="176280"/>
    <lineage>
        <taxon>Bacteria</taxon>
        <taxon>Bacillati</taxon>
        <taxon>Bacillota</taxon>
        <taxon>Bacilli</taxon>
        <taxon>Bacillales</taxon>
        <taxon>Staphylococcaceae</taxon>
        <taxon>Staphylococcus</taxon>
    </lineage>
</organism>
<dbReference type="EMBL" id="AE015929">
    <property type="protein sequence ID" value="AAO05431.1"/>
    <property type="molecule type" value="Genomic_DNA"/>
</dbReference>
<dbReference type="RefSeq" id="NP_765345.1">
    <property type="nucleotide sequence ID" value="NC_004461.1"/>
</dbReference>
<dbReference type="RefSeq" id="WP_001829714.1">
    <property type="nucleotide sequence ID" value="NZ_WBME01000007.1"/>
</dbReference>
<dbReference type="SMR" id="Q8CRJ0"/>
<dbReference type="GeneID" id="63934738"/>
<dbReference type="KEGG" id="sep:SE_1790"/>
<dbReference type="PATRIC" id="fig|176280.10.peg.1747"/>
<dbReference type="eggNOG" id="COG0103">
    <property type="taxonomic scope" value="Bacteria"/>
</dbReference>
<dbReference type="HOGENOM" id="CLU_046483_2_1_9"/>
<dbReference type="OrthoDB" id="9803965at2"/>
<dbReference type="Proteomes" id="UP000001411">
    <property type="component" value="Chromosome"/>
</dbReference>
<dbReference type="GO" id="GO:0022627">
    <property type="term" value="C:cytosolic small ribosomal subunit"/>
    <property type="evidence" value="ECO:0007669"/>
    <property type="project" value="TreeGrafter"/>
</dbReference>
<dbReference type="GO" id="GO:0003723">
    <property type="term" value="F:RNA binding"/>
    <property type="evidence" value="ECO:0007669"/>
    <property type="project" value="TreeGrafter"/>
</dbReference>
<dbReference type="GO" id="GO:0003735">
    <property type="term" value="F:structural constituent of ribosome"/>
    <property type="evidence" value="ECO:0007669"/>
    <property type="project" value="InterPro"/>
</dbReference>
<dbReference type="GO" id="GO:0006412">
    <property type="term" value="P:translation"/>
    <property type="evidence" value="ECO:0007669"/>
    <property type="project" value="UniProtKB-UniRule"/>
</dbReference>
<dbReference type="FunFam" id="3.30.230.10:FF:000001">
    <property type="entry name" value="30S ribosomal protein S9"/>
    <property type="match status" value="1"/>
</dbReference>
<dbReference type="Gene3D" id="3.30.230.10">
    <property type="match status" value="1"/>
</dbReference>
<dbReference type="HAMAP" id="MF_00532_B">
    <property type="entry name" value="Ribosomal_uS9_B"/>
    <property type="match status" value="1"/>
</dbReference>
<dbReference type="InterPro" id="IPR020568">
    <property type="entry name" value="Ribosomal_Su5_D2-typ_SF"/>
</dbReference>
<dbReference type="InterPro" id="IPR000754">
    <property type="entry name" value="Ribosomal_uS9"/>
</dbReference>
<dbReference type="InterPro" id="IPR023035">
    <property type="entry name" value="Ribosomal_uS9_bac/plastid"/>
</dbReference>
<dbReference type="InterPro" id="IPR020574">
    <property type="entry name" value="Ribosomal_uS9_CS"/>
</dbReference>
<dbReference type="InterPro" id="IPR014721">
    <property type="entry name" value="Ribsml_uS5_D2-typ_fold_subgr"/>
</dbReference>
<dbReference type="NCBIfam" id="NF001099">
    <property type="entry name" value="PRK00132.1"/>
    <property type="match status" value="1"/>
</dbReference>
<dbReference type="PANTHER" id="PTHR21569">
    <property type="entry name" value="RIBOSOMAL PROTEIN S9"/>
    <property type="match status" value="1"/>
</dbReference>
<dbReference type="PANTHER" id="PTHR21569:SF1">
    <property type="entry name" value="SMALL RIBOSOMAL SUBUNIT PROTEIN US9M"/>
    <property type="match status" value="1"/>
</dbReference>
<dbReference type="Pfam" id="PF00380">
    <property type="entry name" value="Ribosomal_S9"/>
    <property type="match status" value="1"/>
</dbReference>
<dbReference type="SUPFAM" id="SSF54211">
    <property type="entry name" value="Ribosomal protein S5 domain 2-like"/>
    <property type="match status" value="1"/>
</dbReference>
<dbReference type="PROSITE" id="PS00360">
    <property type="entry name" value="RIBOSOMAL_S9"/>
    <property type="match status" value="1"/>
</dbReference>
<reference key="1">
    <citation type="journal article" date="2003" name="Mol. Microbiol.">
        <title>Genome-based analysis of virulence genes in a non-biofilm-forming Staphylococcus epidermidis strain (ATCC 12228).</title>
        <authorList>
            <person name="Zhang Y.-Q."/>
            <person name="Ren S.-X."/>
            <person name="Li H.-L."/>
            <person name="Wang Y.-X."/>
            <person name="Fu G."/>
            <person name="Yang J."/>
            <person name="Qin Z.-Q."/>
            <person name="Miao Y.-G."/>
            <person name="Wang W.-Y."/>
            <person name="Chen R.-S."/>
            <person name="Shen Y."/>
            <person name="Chen Z."/>
            <person name="Yuan Z.-H."/>
            <person name="Zhao G.-P."/>
            <person name="Qu D."/>
            <person name="Danchin A."/>
            <person name="Wen Y.-M."/>
        </authorList>
    </citation>
    <scope>NUCLEOTIDE SEQUENCE [LARGE SCALE GENOMIC DNA]</scope>
    <source>
        <strain>ATCC 12228 / FDA PCI 1200</strain>
    </source>
</reference>